<name>CLU_SCLS1</name>
<feature type="chain" id="PRO_0000366414" description="Clustered mitochondria protein homolog">
    <location>
        <begin position="1"/>
        <end position="1311"/>
    </location>
</feature>
<feature type="domain" description="Clu" evidence="2">
    <location>
        <begin position="335"/>
        <end position="579"/>
    </location>
</feature>
<feature type="repeat" description="TPR 1">
    <location>
        <begin position="1034"/>
        <end position="1067"/>
    </location>
</feature>
<feature type="repeat" description="TPR 2">
    <location>
        <begin position="1076"/>
        <end position="1109"/>
    </location>
</feature>
<feature type="repeat" description="TPR 3">
    <location>
        <begin position="1118"/>
        <end position="1151"/>
    </location>
</feature>
<feature type="region of interest" description="Disordered" evidence="3">
    <location>
        <begin position="1"/>
        <end position="46"/>
    </location>
</feature>
<feature type="region of interest" description="Disordered" evidence="3">
    <location>
        <begin position="629"/>
        <end position="691"/>
    </location>
</feature>
<feature type="region of interest" description="Disordered" evidence="3">
    <location>
        <begin position="915"/>
        <end position="965"/>
    </location>
</feature>
<feature type="region of interest" description="Disordered" evidence="3">
    <location>
        <begin position="1236"/>
        <end position="1311"/>
    </location>
</feature>
<feature type="compositionally biased region" description="Polar residues" evidence="3">
    <location>
        <begin position="7"/>
        <end position="24"/>
    </location>
</feature>
<feature type="compositionally biased region" description="Basic and acidic residues" evidence="3">
    <location>
        <begin position="655"/>
        <end position="691"/>
    </location>
</feature>
<feature type="compositionally biased region" description="Polar residues" evidence="3">
    <location>
        <begin position="915"/>
        <end position="930"/>
    </location>
</feature>
<feature type="compositionally biased region" description="Polar residues" evidence="3">
    <location>
        <begin position="1242"/>
        <end position="1253"/>
    </location>
</feature>
<feature type="compositionally biased region" description="Basic and acidic residues" evidence="3">
    <location>
        <begin position="1259"/>
        <end position="1279"/>
    </location>
</feature>
<feature type="compositionally biased region" description="Basic residues" evidence="3">
    <location>
        <begin position="1289"/>
        <end position="1303"/>
    </location>
</feature>
<protein>
    <recommendedName>
        <fullName evidence="1">Clustered mitochondria protein homolog</fullName>
    </recommendedName>
    <alternativeName>
        <fullName evidence="1">Protein TIF31 homolog</fullName>
    </alternativeName>
</protein>
<reference key="1">
    <citation type="journal article" date="2011" name="PLoS Genet.">
        <title>Genomic analysis of the necrotrophic fungal pathogens Sclerotinia sclerotiorum and Botrytis cinerea.</title>
        <authorList>
            <person name="Amselem J."/>
            <person name="Cuomo C.A."/>
            <person name="van Kan J.A.L."/>
            <person name="Viaud M."/>
            <person name="Benito E.P."/>
            <person name="Couloux A."/>
            <person name="Coutinho P.M."/>
            <person name="de Vries R.P."/>
            <person name="Dyer P.S."/>
            <person name="Fillinger S."/>
            <person name="Fournier E."/>
            <person name="Gout L."/>
            <person name="Hahn M."/>
            <person name="Kohn L."/>
            <person name="Lapalu N."/>
            <person name="Plummer K.M."/>
            <person name="Pradier J.-M."/>
            <person name="Quevillon E."/>
            <person name="Sharon A."/>
            <person name="Simon A."/>
            <person name="ten Have A."/>
            <person name="Tudzynski B."/>
            <person name="Tudzynski P."/>
            <person name="Wincker P."/>
            <person name="Andrew M."/>
            <person name="Anthouard V."/>
            <person name="Beever R.E."/>
            <person name="Beffa R."/>
            <person name="Benoit I."/>
            <person name="Bouzid O."/>
            <person name="Brault B."/>
            <person name="Chen Z."/>
            <person name="Choquer M."/>
            <person name="Collemare J."/>
            <person name="Cotton P."/>
            <person name="Danchin E.G."/>
            <person name="Da Silva C."/>
            <person name="Gautier A."/>
            <person name="Giraud C."/>
            <person name="Giraud T."/>
            <person name="Gonzalez C."/>
            <person name="Grossetete S."/>
            <person name="Gueldener U."/>
            <person name="Henrissat B."/>
            <person name="Howlett B.J."/>
            <person name="Kodira C."/>
            <person name="Kretschmer M."/>
            <person name="Lappartient A."/>
            <person name="Leroch M."/>
            <person name="Levis C."/>
            <person name="Mauceli E."/>
            <person name="Neuveglise C."/>
            <person name="Oeser B."/>
            <person name="Pearson M."/>
            <person name="Poulain J."/>
            <person name="Poussereau N."/>
            <person name="Quesneville H."/>
            <person name="Rascle C."/>
            <person name="Schumacher J."/>
            <person name="Segurens B."/>
            <person name="Sexton A."/>
            <person name="Silva E."/>
            <person name="Sirven C."/>
            <person name="Soanes D.M."/>
            <person name="Talbot N.J."/>
            <person name="Templeton M."/>
            <person name="Yandava C."/>
            <person name="Yarden O."/>
            <person name="Zeng Q."/>
            <person name="Rollins J.A."/>
            <person name="Lebrun M.-H."/>
            <person name="Dickman M."/>
        </authorList>
    </citation>
    <scope>NUCLEOTIDE SEQUENCE [LARGE SCALE GENOMIC DNA]</scope>
    <source>
        <strain>ATCC 18683 / 1980 / Ss-1</strain>
    </source>
</reference>
<evidence type="ECO:0000255" key="1">
    <source>
        <dbReference type="HAMAP-Rule" id="MF_03013"/>
    </source>
</evidence>
<evidence type="ECO:0000255" key="2">
    <source>
        <dbReference type="PROSITE-ProRule" id="PRU01167"/>
    </source>
</evidence>
<evidence type="ECO:0000256" key="3">
    <source>
        <dbReference type="SAM" id="MobiDB-lite"/>
    </source>
</evidence>
<proteinExistence type="inferred from homology"/>
<comment type="function">
    <text evidence="1">mRNA-binding protein involved in proper cytoplasmic distribution of mitochondria.</text>
</comment>
<comment type="subunit">
    <text evidence="1">May associate with the eukaryotic translation initiation factor 3 (eIF-3) complex.</text>
</comment>
<comment type="subcellular location">
    <subcellularLocation>
        <location evidence="1">Cytoplasm</location>
    </subcellularLocation>
</comment>
<comment type="similarity">
    <text evidence="1">Belongs to the CLU family.</text>
</comment>
<sequence>MAATNEVIPTSENPSDVSGSSQKLATEETALANGVDHEEEDSGEAGGEVFQLTVVLPREPHKIPIIVSSQEAIHDVRQSIIELPGTFQYSCFHLEHKGERINDFVQISEVPGLTADSEIHLVEDPYTEKEARIHIVRVRELIGAAGDRTDTLNGIISGVSLLDSVTSAESTQNGTSTAPSHPMVGFDFQASGTLSTLLPKAQEPGPKTIKSISVSPWNPPPYHLRQKGHLLYLQVTTNEGEQFQITSHVSGFYVNKSSTGKFDPSPKSAPKAHSAHSLLALLGDLSPSFEDSFKRLQEYNNTKEPLATFQITNATPSNPWIVPSASAPLVAHQADITRTQENYLIAGIENSETLRDWNEEFQSTRELPKETVQDRVFRERLTSKLFADYNDAAARGAILVARGEIAPLNPTEGKDAQIFVYNNVFFSFGADGVGTFASEGGDEAARAAVGKDVMGVRMVNQLDIDGLFTPGTVVVDYLGKRIVGQSIVPGIFKQRDPGENQIDYGAVDGKDIVASDEKFVSVFEKLSKALKVKKHAVWDKDGKRHDLEGSIETKGLLGTDGRKYVLDLYRVTPLDITWMEEVGTALDSPKEADVASESAYPHRMTVIRPELVEAYWKVKMREWVNGELERKRQAQKTIEPTAEEKEPGAVAEASEASKSDEPTENGELAKKADESDKDAEPSKPAADQERIDIGDFKFALNPDAFSGQQPQTDEEKAEFAEDEQQVRLVCEFLRKTVLPELVNDLKEGDVGFPMDGQSLSRLLHKRGINIRYLGQVATLADGKRLESLRILAVQEMVSRAFKHVAGNYLRYLPIPLTSSCIAHLLNCLLGTDLNATPKPDVDEAMAALYPDADLKFKEVSPESLKRDIEAQILRRFRYTLDSTWTAAIKHLQLLREVSLKLGIQLEMKPYHFTKQSQTEAAAAPPTTNGEATKDAAPTGKSTNGKKKKKNAREGSPASITSVNASSPVTFNPDDILNTVPVIKEASPRSSLAEEALEAGRISLLQDQKKLGQELLLESLSLHEQIYGILHPEVARVYNSLSMLYYQLDEKEAAMELARKAVIVSERTLGVDNAETLLNYLNLGLIAHASGETKLALTYIKHALDLWKVVYGPNHPDSITTINNAAVMLQHLKEYHDSRTWFEASLKICEEVYGKHSINAATLLFQLAQALALDQDSKSAVNRMRESYNIFLTELGAEDKNTKEAEKWLEQLTQNAVSIAKHAKDVQARRNRAGIRVSPRVTLGQTQLQPQVGQTAEAAAGRDSRSSRGLDSRSIDELLKFIEGSDQANKNKKRPGRSNPKRRGGAAAAAGK</sequence>
<keyword id="KW-0963">Cytoplasm</keyword>
<keyword id="KW-1185">Reference proteome</keyword>
<keyword id="KW-0677">Repeat</keyword>
<keyword id="KW-0802">TPR repeat</keyword>
<dbReference type="EMBL" id="CH476629">
    <property type="protein sequence ID" value="EDO04509.1"/>
    <property type="molecule type" value="Genomic_DNA"/>
</dbReference>
<dbReference type="RefSeq" id="XP_001591546.1">
    <property type="nucleotide sequence ID" value="XM_001591496.1"/>
</dbReference>
<dbReference type="SMR" id="A7ENU3"/>
<dbReference type="FunCoup" id="A7ENU3">
    <property type="interactions" value="915"/>
</dbReference>
<dbReference type="STRING" id="665079.A7ENU3"/>
<dbReference type="EnsemblFungi" id="EDO04509">
    <property type="protein sequence ID" value="EDO04509"/>
    <property type="gene ID" value="SS1G_06992"/>
</dbReference>
<dbReference type="GeneID" id="5487697"/>
<dbReference type="KEGG" id="ssl:SS1G_06992"/>
<dbReference type="VEuPathDB" id="FungiDB:sscle_06g052630"/>
<dbReference type="eggNOG" id="KOG1839">
    <property type="taxonomic scope" value="Eukaryota"/>
</dbReference>
<dbReference type="HOGENOM" id="CLU_003256_2_0_1"/>
<dbReference type="InParanoid" id="A7ENU3"/>
<dbReference type="OMA" id="HPVWDKD"/>
<dbReference type="OrthoDB" id="1414216at2759"/>
<dbReference type="Proteomes" id="UP000001312">
    <property type="component" value="Unassembled WGS sequence"/>
</dbReference>
<dbReference type="GO" id="GO:0005737">
    <property type="term" value="C:cytoplasm"/>
    <property type="evidence" value="ECO:0000318"/>
    <property type="project" value="GO_Central"/>
</dbReference>
<dbReference type="GO" id="GO:0003729">
    <property type="term" value="F:mRNA binding"/>
    <property type="evidence" value="ECO:0000318"/>
    <property type="project" value="GO_Central"/>
</dbReference>
<dbReference type="GO" id="GO:0048312">
    <property type="term" value="P:intracellular distribution of mitochondria"/>
    <property type="evidence" value="ECO:0000318"/>
    <property type="project" value="GO_Central"/>
</dbReference>
<dbReference type="GO" id="GO:0007005">
    <property type="term" value="P:mitochondrion organization"/>
    <property type="evidence" value="ECO:0007669"/>
    <property type="project" value="UniProtKB-UniRule"/>
</dbReference>
<dbReference type="CDD" id="cd15466">
    <property type="entry name" value="CLU-central"/>
    <property type="match status" value="1"/>
</dbReference>
<dbReference type="FunFam" id="1.25.40.10:FF:000293">
    <property type="entry name" value="Clustered mitochondria protein homolog"/>
    <property type="match status" value="1"/>
</dbReference>
<dbReference type="FunFam" id="1.25.40.10:FF:000532">
    <property type="entry name" value="Clustered mitochondria protein homolog"/>
    <property type="match status" value="1"/>
</dbReference>
<dbReference type="FunFam" id="3.30.2280.10:FF:000002">
    <property type="entry name" value="Clustered mitochondria protein homolog"/>
    <property type="match status" value="1"/>
</dbReference>
<dbReference type="Gene3D" id="3.30.2280.10">
    <property type="entry name" value="Hypothetical protein (hspc210)"/>
    <property type="match status" value="1"/>
</dbReference>
<dbReference type="Gene3D" id="1.25.40.10">
    <property type="entry name" value="Tetratricopeptide repeat domain"/>
    <property type="match status" value="2"/>
</dbReference>
<dbReference type="HAMAP" id="MF_03013">
    <property type="entry name" value="CLU"/>
    <property type="match status" value="1"/>
</dbReference>
<dbReference type="InterPro" id="IPR033646">
    <property type="entry name" value="CLU-central"/>
</dbReference>
<dbReference type="InterPro" id="IPR025697">
    <property type="entry name" value="CLU_dom"/>
</dbReference>
<dbReference type="InterPro" id="IPR028275">
    <property type="entry name" value="CLU_N"/>
</dbReference>
<dbReference type="InterPro" id="IPR027523">
    <property type="entry name" value="CLU_prot"/>
</dbReference>
<dbReference type="InterPro" id="IPR007967">
    <property type="entry name" value="GSKIP_dom"/>
</dbReference>
<dbReference type="InterPro" id="IPR023231">
    <property type="entry name" value="GSKIP_dom_sf"/>
</dbReference>
<dbReference type="InterPro" id="IPR011990">
    <property type="entry name" value="TPR-like_helical_dom_sf"/>
</dbReference>
<dbReference type="InterPro" id="IPR019734">
    <property type="entry name" value="TPR_rpt"/>
</dbReference>
<dbReference type="PANTHER" id="PTHR12601:SF6">
    <property type="entry name" value="CLUSTERED MITOCHONDRIA PROTEIN HOMOLOG"/>
    <property type="match status" value="1"/>
</dbReference>
<dbReference type="PANTHER" id="PTHR12601">
    <property type="entry name" value="EUKARYOTIC TRANSLATION INITIATION FACTOR 3 SUBUNIT EIF-3"/>
    <property type="match status" value="1"/>
</dbReference>
<dbReference type="Pfam" id="PF13236">
    <property type="entry name" value="CLU"/>
    <property type="match status" value="1"/>
</dbReference>
<dbReference type="Pfam" id="PF15044">
    <property type="entry name" value="CLU_N"/>
    <property type="match status" value="1"/>
</dbReference>
<dbReference type="Pfam" id="PF12807">
    <property type="entry name" value="eIF3_p135"/>
    <property type="match status" value="1"/>
</dbReference>
<dbReference type="Pfam" id="PF05303">
    <property type="entry name" value="GSKIP_dom"/>
    <property type="match status" value="1"/>
</dbReference>
<dbReference type="Pfam" id="PF13374">
    <property type="entry name" value="TPR_10"/>
    <property type="match status" value="2"/>
</dbReference>
<dbReference type="Pfam" id="PF13424">
    <property type="entry name" value="TPR_12"/>
    <property type="match status" value="1"/>
</dbReference>
<dbReference type="SMART" id="SM00028">
    <property type="entry name" value="TPR"/>
    <property type="match status" value="3"/>
</dbReference>
<dbReference type="SUPFAM" id="SSF103107">
    <property type="entry name" value="Hypothetical protein c14orf129, hspc210"/>
    <property type="match status" value="1"/>
</dbReference>
<dbReference type="SUPFAM" id="SSF48452">
    <property type="entry name" value="TPR-like"/>
    <property type="match status" value="2"/>
</dbReference>
<dbReference type="PROSITE" id="PS51823">
    <property type="entry name" value="CLU"/>
    <property type="match status" value="1"/>
</dbReference>
<dbReference type="PROSITE" id="PS50005">
    <property type="entry name" value="TPR"/>
    <property type="match status" value="2"/>
</dbReference>
<dbReference type="PROSITE" id="PS50293">
    <property type="entry name" value="TPR_REGION"/>
    <property type="match status" value="1"/>
</dbReference>
<gene>
    <name evidence="1" type="primary">clu1</name>
    <name type="synonym">tif31</name>
    <name type="ORF">SS1G_06992</name>
</gene>
<organism>
    <name type="scientific">Sclerotinia sclerotiorum (strain ATCC 18683 / 1980 / Ss-1)</name>
    <name type="common">White mold</name>
    <name type="synonym">Whetzelinia sclerotiorum</name>
    <dbReference type="NCBI Taxonomy" id="665079"/>
    <lineage>
        <taxon>Eukaryota</taxon>
        <taxon>Fungi</taxon>
        <taxon>Dikarya</taxon>
        <taxon>Ascomycota</taxon>
        <taxon>Pezizomycotina</taxon>
        <taxon>Leotiomycetes</taxon>
        <taxon>Helotiales</taxon>
        <taxon>Sclerotiniaceae</taxon>
        <taxon>Sclerotinia</taxon>
    </lineage>
</organism>
<accession>A7ENU3</accession>